<protein>
    <recommendedName>
        <fullName evidence="1">NAD kinase</fullName>
        <ecNumber evidence="1">2.7.1.23</ecNumber>
    </recommendedName>
    <alternativeName>
        <fullName evidence="1">ATP-dependent NAD kinase</fullName>
    </alternativeName>
</protein>
<reference key="1">
    <citation type="journal article" date="2005" name="Genome Res.">
        <title>Comparative and functional genomic analyses of the pathogenicity of phytopathogen Xanthomonas campestris pv. campestris.</title>
        <authorList>
            <person name="Qian W."/>
            <person name="Jia Y."/>
            <person name="Ren S.-X."/>
            <person name="He Y.-Q."/>
            <person name="Feng J.-X."/>
            <person name="Lu L.-F."/>
            <person name="Sun Q."/>
            <person name="Ying G."/>
            <person name="Tang D.-J."/>
            <person name="Tang H."/>
            <person name="Wu W."/>
            <person name="Hao P."/>
            <person name="Wang L."/>
            <person name="Jiang B.-L."/>
            <person name="Zeng S."/>
            <person name="Gu W.-Y."/>
            <person name="Lu G."/>
            <person name="Rong L."/>
            <person name="Tian Y."/>
            <person name="Yao Z."/>
            <person name="Fu G."/>
            <person name="Chen B."/>
            <person name="Fang R."/>
            <person name="Qiang B."/>
            <person name="Chen Z."/>
            <person name="Zhao G.-P."/>
            <person name="Tang J.-L."/>
            <person name="He C."/>
        </authorList>
    </citation>
    <scope>NUCLEOTIDE SEQUENCE [LARGE SCALE GENOMIC DNA]</scope>
    <source>
        <strain>8004</strain>
    </source>
</reference>
<keyword id="KW-0067">ATP-binding</keyword>
<keyword id="KW-0963">Cytoplasm</keyword>
<keyword id="KW-0418">Kinase</keyword>
<keyword id="KW-0520">NAD</keyword>
<keyword id="KW-0521">NADP</keyword>
<keyword id="KW-0547">Nucleotide-binding</keyword>
<keyword id="KW-0808">Transferase</keyword>
<dbReference type="EC" id="2.7.1.23" evidence="1"/>
<dbReference type="EMBL" id="CP000050">
    <property type="protein sequence ID" value="AAY49737.1"/>
    <property type="molecule type" value="Genomic_DNA"/>
</dbReference>
<dbReference type="RefSeq" id="WP_011036730.1">
    <property type="nucleotide sequence ID" value="NZ_CP155948.1"/>
</dbReference>
<dbReference type="SMR" id="Q4UT86"/>
<dbReference type="KEGG" id="xcb:XC_2688"/>
<dbReference type="HOGENOM" id="CLU_073319_0_0_6"/>
<dbReference type="Proteomes" id="UP000000420">
    <property type="component" value="Chromosome"/>
</dbReference>
<dbReference type="GO" id="GO:0005737">
    <property type="term" value="C:cytoplasm"/>
    <property type="evidence" value="ECO:0007669"/>
    <property type="project" value="UniProtKB-SubCell"/>
</dbReference>
<dbReference type="GO" id="GO:0005524">
    <property type="term" value="F:ATP binding"/>
    <property type="evidence" value="ECO:0007669"/>
    <property type="project" value="UniProtKB-KW"/>
</dbReference>
<dbReference type="GO" id="GO:0046872">
    <property type="term" value="F:metal ion binding"/>
    <property type="evidence" value="ECO:0007669"/>
    <property type="project" value="UniProtKB-UniRule"/>
</dbReference>
<dbReference type="GO" id="GO:0051287">
    <property type="term" value="F:NAD binding"/>
    <property type="evidence" value="ECO:0007669"/>
    <property type="project" value="UniProtKB-ARBA"/>
</dbReference>
<dbReference type="GO" id="GO:0003951">
    <property type="term" value="F:NAD+ kinase activity"/>
    <property type="evidence" value="ECO:0007669"/>
    <property type="project" value="UniProtKB-UniRule"/>
</dbReference>
<dbReference type="GO" id="GO:0019674">
    <property type="term" value="P:NAD metabolic process"/>
    <property type="evidence" value="ECO:0007669"/>
    <property type="project" value="InterPro"/>
</dbReference>
<dbReference type="GO" id="GO:0006741">
    <property type="term" value="P:NADP biosynthetic process"/>
    <property type="evidence" value="ECO:0007669"/>
    <property type="project" value="UniProtKB-UniRule"/>
</dbReference>
<dbReference type="FunFam" id="2.60.200.30:FF:000012">
    <property type="entry name" value="NAD kinase"/>
    <property type="match status" value="1"/>
</dbReference>
<dbReference type="Gene3D" id="3.40.50.10330">
    <property type="entry name" value="Probable inorganic polyphosphate/atp-NAD kinase, domain 1"/>
    <property type="match status" value="1"/>
</dbReference>
<dbReference type="Gene3D" id="2.60.200.30">
    <property type="entry name" value="Probable inorganic polyphosphate/atp-NAD kinase, domain 2"/>
    <property type="match status" value="1"/>
</dbReference>
<dbReference type="HAMAP" id="MF_00361">
    <property type="entry name" value="NAD_kinase"/>
    <property type="match status" value="1"/>
</dbReference>
<dbReference type="InterPro" id="IPR017438">
    <property type="entry name" value="ATP-NAD_kinase_N"/>
</dbReference>
<dbReference type="InterPro" id="IPR017437">
    <property type="entry name" value="ATP-NAD_kinase_PpnK-typ_C"/>
</dbReference>
<dbReference type="InterPro" id="IPR016064">
    <property type="entry name" value="NAD/diacylglycerol_kinase_sf"/>
</dbReference>
<dbReference type="InterPro" id="IPR002504">
    <property type="entry name" value="NADK"/>
</dbReference>
<dbReference type="NCBIfam" id="NF003406">
    <property type="entry name" value="PRK04761.1"/>
    <property type="match status" value="1"/>
</dbReference>
<dbReference type="PANTHER" id="PTHR20275">
    <property type="entry name" value="NAD KINASE"/>
    <property type="match status" value="1"/>
</dbReference>
<dbReference type="PANTHER" id="PTHR20275:SF0">
    <property type="entry name" value="NAD KINASE"/>
    <property type="match status" value="1"/>
</dbReference>
<dbReference type="Pfam" id="PF01513">
    <property type="entry name" value="NAD_kinase"/>
    <property type="match status" value="1"/>
</dbReference>
<dbReference type="Pfam" id="PF20143">
    <property type="entry name" value="NAD_kinase_C"/>
    <property type="match status" value="1"/>
</dbReference>
<dbReference type="SUPFAM" id="SSF111331">
    <property type="entry name" value="NAD kinase/diacylglycerol kinase-like"/>
    <property type="match status" value="1"/>
</dbReference>
<proteinExistence type="inferred from homology"/>
<gene>
    <name evidence="1" type="primary">nadK</name>
    <name type="ordered locus">XC_2688</name>
</gene>
<name>NADK_XANC8</name>
<organism>
    <name type="scientific">Xanthomonas campestris pv. campestris (strain 8004)</name>
    <dbReference type="NCBI Taxonomy" id="314565"/>
    <lineage>
        <taxon>Bacteria</taxon>
        <taxon>Pseudomonadati</taxon>
        <taxon>Pseudomonadota</taxon>
        <taxon>Gammaproteobacteria</taxon>
        <taxon>Lysobacterales</taxon>
        <taxon>Lysobacteraceae</taxon>
        <taxon>Xanthomonas</taxon>
    </lineage>
</organism>
<sequence length="258" mass="28471">MTAMPRIAFLASPAEPAVAARARLVQRYGDHALHDADIVCALGGDGFMLQTLHRHGAADKPVFGMKLGSVGFLMNQYRDDEDDLLARLQRAEPAHLRPLEMLVQTESGTSAGSLAYNEVSLLRQTRQAAHLSVDLNGQTRIAELIGDGVMVATPAGSTAYNYSAHGPILPLGSHTLALTPIAPYRPRRWRGAILKADTEVRFRVLDPYKRPVSVTADSHEIRDVVEVTIRESTERRVTLLFDPEHNLEERIFSEQFAV</sequence>
<evidence type="ECO:0000255" key="1">
    <source>
        <dbReference type="HAMAP-Rule" id="MF_00361"/>
    </source>
</evidence>
<feature type="chain" id="PRO_0000229712" description="NAD kinase">
    <location>
        <begin position="1"/>
        <end position="258"/>
    </location>
</feature>
<feature type="active site" description="Proton acceptor" evidence="1">
    <location>
        <position position="45"/>
    </location>
</feature>
<feature type="binding site" evidence="1">
    <location>
        <begin position="45"/>
        <end position="46"/>
    </location>
    <ligand>
        <name>NAD(+)</name>
        <dbReference type="ChEBI" id="CHEBI:57540"/>
    </ligand>
</feature>
<feature type="binding site" evidence="1">
    <location>
        <begin position="117"/>
        <end position="118"/>
    </location>
    <ligand>
        <name>NAD(+)</name>
        <dbReference type="ChEBI" id="CHEBI:57540"/>
    </ligand>
</feature>
<feature type="binding site" evidence="1">
    <location>
        <position position="147"/>
    </location>
    <ligand>
        <name>NAD(+)</name>
        <dbReference type="ChEBI" id="CHEBI:57540"/>
    </ligand>
</feature>
<feature type="binding site" evidence="1">
    <location>
        <position position="155"/>
    </location>
    <ligand>
        <name>NAD(+)</name>
        <dbReference type="ChEBI" id="CHEBI:57540"/>
    </ligand>
</feature>
<feature type="binding site" evidence="1">
    <location>
        <begin position="158"/>
        <end position="163"/>
    </location>
    <ligand>
        <name>NAD(+)</name>
        <dbReference type="ChEBI" id="CHEBI:57540"/>
    </ligand>
</feature>
<feature type="binding site" evidence="1">
    <location>
        <position position="182"/>
    </location>
    <ligand>
        <name>NAD(+)</name>
        <dbReference type="ChEBI" id="CHEBI:57540"/>
    </ligand>
</feature>
<comment type="function">
    <text evidence="1">Involved in the regulation of the intracellular balance of NAD and NADP, and is a key enzyme in the biosynthesis of NADP. Catalyzes specifically the phosphorylation on 2'-hydroxyl of the adenosine moiety of NAD to yield NADP.</text>
</comment>
<comment type="catalytic activity">
    <reaction evidence="1">
        <text>NAD(+) + ATP = ADP + NADP(+) + H(+)</text>
        <dbReference type="Rhea" id="RHEA:18629"/>
        <dbReference type="ChEBI" id="CHEBI:15378"/>
        <dbReference type="ChEBI" id="CHEBI:30616"/>
        <dbReference type="ChEBI" id="CHEBI:57540"/>
        <dbReference type="ChEBI" id="CHEBI:58349"/>
        <dbReference type="ChEBI" id="CHEBI:456216"/>
        <dbReference type="EC" id="2.7.1.23"/>
    </reaction>
</comment>
<comment type="cofactor">
    <cofactor evidence="1">
        <name>a divalent metal cation</name>
        <dbReference type="ChEBI" id="CHEBI:60240"/>
    </cofactor>
</comment>
<comment type="subcellular location">
    <subcellularLocation>
        <location evidence="1">Cytoplasm</location>
    </subcellularLocation>
</comment>
<comment type="similarity">
    <text evidence="1">Belongs to the NAD kinase family.</text>
</comment>
<accession>Q4UT86</accession>